<keyword id="KW-0997">Cell inner membrane</keyword>
<keyword id="KW-1003">Cell membrane</keyword>
<keyword id="KW-0472">Membrane</keyword>
<keyword id="KW-1185">Reference proteome</keyword>
<keyword id="KW-0812">Transmembrane</keyword>
<keyword id="KW-1133">Transmembrane helix</keyword>
<keyword id="KW-0813">Transport</keyword>
<name>YJJB_ECOL6</name>
<sequence>MGVIEFLLALAQDMILAAIPAVGFAMVFNVPVRALRWCALLGAIGHGSRMILMTSGLNIEWSTFMASMLVGTIGIQWSRWYLAHPKVFTVAAVIPMFPGISAYTAMISAVKISQLGYSEPLMITLLTNFLTASSIVGALSIGLSIPGLWLYRKRPRV</sequence>
<feature type="chain" id="PRO_0000169806" description="Probable succinate transporter subunit YjjB">
    <location>
        <begin position="1"/>
        <end position="157"/>
    </location>
</feature>
<feature type="transmembrane region" description="Helical" evidence="1">
    <location>
        <begin position="8"/>
        <end position="28"/>
    </location>
</feature>
<feature type="transmembrane region" description="Helical" evidence="1">
    <location>
        <begin position="50"/>
        <end position="70"/>
    </location>
</feature>
<feature type="transmembrane region" description="Helical" evidence="1">
    <location>
        <begin position="87"/>
        <end position="107"/>
    </location>
</feature>
<feature type="transmembrane region" description="Helical" evidence="1">
    <location>
        <begin position="129"/>
        <end position="149"/>
    </location>
</feature>
<comment type="function">
    <text evidence="1">Involved in succinate export with YjjP. Both proteins are required for export.</text>
</comment>
<comment type="subunit">
    <text evidence="1">The transporter is composed of YjjB and YjjP.</text>
</comment>
<comment type="subcellular location">
    <subcellularLocation>
        <location evidence="1">Cell inner membrane</location>
        <topology evidence="1">Multi-pass membrane protein</topology>
    </subcellularLocation>
</comment>
<comment type="similarity">
    <text evidence="1">Belongs to the ThrE exporter (TC 2.A.79) family.</text>
</comment>
<comment type="sequence caution" evidence="2">
    <conflict type="erroneous initiation">
        <sequence resource="EMBL-CDS" id="AAN83862"/>
    </conflict>
</comment>
<organism>
    <name type="scientific">Escherichia coli O6:H1 (strain CFT073 / ATCC 700928 / UPEC)</name>
    <dbReference type="NCBI Taxonomy" id="199310"/>
    <lineage>
        <taxon>Bacteria</taxon>
        <taxon>Pseudomonadati</taxon>
        <taxon>Pseudomonadota</taxon>
        <taxon>Gammaproteobacteria</taxon>
        <taxon>Enterobacterales</taxon>
        <taxon>Enterobacteriaceae</taxon>
        <taxon>Escherichia</taxon>
    </lineage>
</organism>
<dbReference type="EMBL" id="AE014075">
    <property type="protein sequence ID" value="AAN83862.1"/>
    <property type="status" value="ALT_INIT"/>
    <property type="molecule type" value="Genomic_DNA"/>
</dbReference>
<dbReference type="RefSeq" id="WP_000538188.1">
    <property type="nucleotide sequence ID" value="NZ_CP051263.1"/>
</dbReference>
<dbReference type="STRING" id="199310.c5442"/>
<dbReference type="KEGG" id="ecc:c5442"/>
<dbReference type="eggNOG" id="COG3610">
    <property type="taxonomic scope" value="Bacteria"/>
</dbReference>
<dbReference type="HOGENOM" id="CLU_117642_1_0_6"/>
<dbReference type="Proteomes" id="UP000001410">
    <property type="component" value="Chromosome"/>
</dbReference>
<dbReference type="GO" id="GO:0005886">
    <property type="term" value="C:plasma membrane"/>
    <property type="evidence" value="ECO:0007669"/>
    <property type="project" value="UniProtKB-SubCell"/>
</dbReference>
<dbReference type="GO" id="GO:0015744">
    <property type="term" value="P:succinate transport"/>
    <property type="evidence" value="ECO:0007669"/>
    <property type="project" value="UniProtKB-UniRule"/>
</dbReference>
<dbReference type="HAMAP" id="MF_01191">
    <property type="entry name" value="YjjB"/>
    <property type="match status" value="1"/>
</dbReference>
<dbReference type="InterPro" id="IPR024528">
    <property type="entry name" value="ThrE_2"/>
</dbReference>
<dbReference type="InterPro" id="IPR050539">
    <property type="entry name" value="ThrE_Dicarb/AminoAcid_Exp"/>
</dbReference>
<dbReference type="InterPro" id="IPR020914">
    <property type="entry name" value="YjjB"/>
</dbReference>
<dbReference type="NCBIfam" id="NF007391">
    <property type="entry name" value="PRK09917.1"/>
    <property type="match status" value="1"/>
</dbReference>
<dbReference type="PANTHER" id="PTHR34390:SF1">
    <property type="entry name" value="SUCCINATE TRANSPORTER SUBUNIT YJJB-RELATED"/>
    <property type="match status" value="1"/>
</dbReference>
<dbReference type="PANTHER" id="PTHR34390">
    <property type="entry name" value="UPF0442 PROTEIN YJJB-RELATED"/>
    <property type="match status" value="1"/>
</dbReference>
<dbReference type="Pfam" id="PF12821">
    <property type="entry name" value="ThrE_2"/>
    <property type="match status" value="1"/>
</dbReference>
<reference key="1">
    <citation type="journal article" date="2002" name="Proc. Natl. Acad. Sci. U.S.A.">
        <title>Extensive mosaic structure revealed by the complete genome sequence of uropathogenic Escherichia coli.</title>
        <authorList>
            <person name="Welch R.A."/>
            <person name="Burland V."/>
            <person name="Plunkett G. III"/>
            <person name="Redford P."/>
            <person name="Roesch P."/>
            <person name="Rasko D."/>
            <person name="Buckles E.L."/>
            <person name="Liou S.-R."/>
            <person name="Boutin A."/>
            <person name="Hackett J."/>
            <person name="Stroud D."/>
            <person name="Mayhew G.F."/>
            <person name="Rose D.J."/>
            <person name="Zhou S."/>
            <person name="Schwartz D.C."/>
            <person name="Perna N.T."/>
            <person name="Mobley H.L.T."/>
            <person name="Donnenberg M.S."/>
            <person name="Blattner F.R."/>
        </authorList>
    </citation>
    <scope>NUCLEOTIDE SEQUENCE [LARGE SCALE GENOMIC DNA]</scope>
    <source>
        <strain>CFT073 / ATCC 700928 / UPEC</strain>
    </source>
</reference>
<gene>
    <name evidence="1" type="primary">yjjB</name>
    <name type="ordered locus">c5442</name>
</gene>
<protein>
    <recommendedName>
        <fullName evidence="1">Probable succinate transporter subunit YjjB</fullName>
    </recommendedName>
</protein>
<accession>P0ADD3</accession>
<accession>P18389</accession>
<evidence type="ECO:0000255" key="1">
    <source>
        <dbReference type="HAMAP-Rule" id="MF_01191"/>
    </source>
</evidence>
<evidence type="ECO:0000305" key="2"/>
<proteinExistence type="inferred from homology"/>